<comment type="function">
    <text evidence="1">Catalyzes the ATP-dependent 2-thiolation of cytidine in position 32 of tRNA, to form 2-thiocytidine (s(2)C32). The sulfur atoms are provided by the cysteine/cysteine desulfurase (IscS) system.</text>
</comment>
<comment type="catalytic activity">
    <reaction evidence="1">
        <text>cytidine(32) in tRNA + S-sulfanyl-L-cysteinyl-[cysteine desulfurase] + AH2 + ATP = 2-thiocytidine(32) in tRNA + L-cysteinyl-[cysteine desulfurase] + A + AMP + diphosphate + H(+)</text>
        <dbReference type="Rhea" id="RHEA:57048"/>
        <dbReference type="Rhea" id="RHEA-COMP:10288"/>
        <dbReference type="Rhea" id="RHEA-COMP:12157"/>
        <dbReference type="Rhea" id="RHEA-COMP:12158"/>
        <dbReference type="Rhea" id="RHEA-COMP:14821"/>
        <dbReference type="ChEBI" id="CHEBI:13193"/>
        <dbReference type="ChEBI" id="CHEBI:15378"/>
        <dbReference type="ChEBI" id="CHEBI:17499"/>
        <dbReference type="ChEBI" id="CHEBI:29950"/>
        <dbReference type="ChEBI" id="CHEBI:30616"/>
        <dbReference type="ChEBI" id="CHEBI:33019"/>
        <dbReference type="ChEBI" id="CHEBI:61963"/>
        <dbReference type="ChEBI" id="CHEBI:82748"/>
        <dbReference type="ChEBI" id="CHEBI:141453"/>
        <dbReference type="ChEBI" id="CHEBI:456215"/>
    </reaction>
    <physiologicalReaction direction="left-to-right" evidence="1">
        <dbReference type="Rhea" id="RHEA:57049"/>
    </physiologicalReaction>
</comment>
<comment type="cofactor">
    <cofactor evidence="1">
        <name>Mg(2+)</name>
        <dbReference type="ChEBI" id="CHEBI:18420"/>
    </cofactor>
</comment>
<comment type="cofactor">
    <cofactor evidence="1">
        <name>[4Fe-4S] cluster</name>
        <dbReference type="ChEBI" id="CHEBI:49883"/>
    </cofactor>
    <text evidence="1">Binds 1 [4Fe-4S] cluster per subunit. The cluster is chelated by three Cys residues, the fourth Fe has a free coordination site that may bind a sulfur atom transferred from the persulfide of IscS.</text>
</comment>
<comment type="pathway">
    <text evidence="1">tRNA modification.</text>
</comment>
<comment type="subunit">
    <text evidence="1">Homodimer.</text>
</comment>
<comment type="subcellular location">
    <subcellularLocation>
        <location evidence="1">Cytoplasm</location>
    </subcellularLocation>
</comment>
<comment type="miscellaneous">
    <text evidence="1">The thiolation reaction likely consists of two steps: a first activation step by ATP to form an adenylated intermediate of the target base of tRNA, and a second nucleophilic substitution step of the sulfur (S) atom supplied by the hydrosulfide attached to the Fe-S cluster.</text>
</comment>
<comment type="similarity">
    <text evidence="1">Belongs to the TtcA family.</text>
</comment>
<feature type="chain" id="PRO_0000348701" description="tRNA-cytidine(32) 2-sulfurtransferase">
    <location>
        <begin position="1"/>
        <end position="311"/>
    </location>
</feature>
<feature type="short sequence motif" description="PP-loop motif" evidence="1">
    <location>
        <begin position="47"/>
        <end position="52"/>
    </location>
</feature>
<feature type="binding site" evidence="1">
    <location>
        <position position="122"/>
    </location>
    <ligand>
        <name>[4Fe-4S] cluster</name>
        <dbReference type="ChEBI" id="CHEBI:49883"/>
    </ligand>
</feature>
<feature type="binding site" evidence="1">
    <location>
        <position position="125"/>
    </location>
    <ligand>
        <name>[4Fe-4S] cluster</name>
        <dbReference type="ChEBI" id="CHEBI:49883"/>
    </ligand>
</feature>
<feature type="binding site" evidence="1">
    <location>
        <position position="213"/>
    </location>
    <ligand>
        <name>[4Fe-4S] cluster</name>
        <dbReference type="ChEBI" id="CHEBI:49883"/>
    </ligand>
</feature>
<gene>
    <name evidence="1" type="primary">ttcA</name>
    <name type="ordered locus">CKO_01418</name>
</gene>
<evidence type="ECO:0000255" key="1">
    <source>
        <dbReference type="HAMAP-Rule" id="MF_01850"/>
    </source>
</evidence>
<organism>
    <name type="scientific">Citrobacter koseri (strain ATCC BAA-895 / CDC 4225-83 / SGSC4696)</name>
    <dbReference type="NCBI Taxonomy" id="290338"/>
    <lineage>
        <taxon>Bacteria</taxon>
        <taxon>Pseudomonadati</taxon>
        <taxon>Pseudomonadota</taxon>
        <taxon>Gammaproteobacteria</taxon>
        <taxon>Enterobacterales</taxon>
        <taxon>Enterobacteriaceae</taxon>
        <taxon>Citrobacter</taxon>
    </lineage>
</organism>
<proteinExistence type="inferred from homology"/>
<reference key="1">
    <citation type="submission" date="2007-08" db="EMBL/GenBank/DDBJ databases">
        <authorList>
            <consortium name="The Citrobacter koseri Genome Sequencing Project"/>
            <person name="McClelland M."/>
            <person name="Sanderson E.K."/>
            <person name="Porwollik S."/>
            <person name="Spieth J."/>
            <person name="Clifton W.S."/>
            <person name="Latreille P."/>
            <person name="Courtney L."/>
            <person name="Wang C."/>
            <person name="Pepin K."/>
            <person name="Bhonagiri V."/>
            <person name="Nash W."/>
            <person name="Johnson M."/>
            <person name="Thiruvilangam P."/>
            <person name="Wilson R."/>
        </authorList>
    </citation>
    <scope>NUCLEOTIDE SEQUENCE [LARGE SCALE GENOMIC DNA]</scope>
    <source>
        <strain>ATCC BAA-895 / CDC 4225-83 / SGSC4696</strain>
    </source>
</reference>
<keyword id="KW-0004">4Fe-4S</keyword>
<keyword id="KW-0067">ATP-binding</keyword>
<keyword id="KW-0963">Cytoplasm</keyword>
<keyword id="KW-0408">Iron</keyword>
<keyword id="KW-0411">Iron-sulfur</keyword>
<keyword id="KW-0460">Magnesium</keyword>
<keyword id="KW-0479">Metal-binding</keyword>
<keyword id="KW-0547">Nucleotide-binding</keyword>
<keyword id="KW-1185">Reference proteome</keyword>
<keyword id="KW-0694">RNA-binding</keyword>
<keyword id="KW-0808">Transferase</keyword>
<keyword id="KW-0819">tRNA processing</keyword>
<keyword id="KW-0820">tRNA-binding</keyword>
<protein>
    <recommendedName>
        <fullName evidence="1">tRNA-cytidine(32) 2-sulfurtransferase</fullName>
        <ecNumber evidence="1">2.8.1.-</ecNumber>
    </recommendedName>
    <alternativeName>
        <fullName evidence="1">Two-thiocytidine biosynthesis protein A</fullName>
    </alternativeName>
    <alternativeName>
        <fullName evidence="1">tRNA 2-thiocytidine biosynthesis protein TtcA</fullName>
    </alternativeName>
</protein>
<accession>A8AGE0</accession>
<name>TTCA_CITK8</name>
<dbReference type="EC" id="2.8.1.-" evidence="1"/>
<dbReference type="EMBL" id="CP000822">
    <property type="protein sequence ID" value="ABV12553.1"/>
    <property type="molecule type" value="Genomic_DNA"/>
</dbReference>
<dbReference type="RefSeq" id="WP_012132294.1">
    <property type="nucleotide sequence ID" value="NC_009792.1"/>
</dbReference>
<dbReference type="SMR" id="A8AGE0"/>
<dbReference type="STRING" id="290338.CKO_01418"/>
<dbReference type="GeneID" id="45135505"/>
<dbReference type="KEGG" id="cko:CKO_01418"/>
<dbReference type="HOGENOM" id="CLU_026481_0_0_6"/>
<dbReference type="OrthoDB" id="9801054at2"/>
<dbReference type="Proteomes" id="UP000008148">
    <property type="component" value="Chromosome"/>
</dbReference>
<dbReference type="GO" id="GO:0005737">
    <property type="term" value="C:cytoplasm"/>
    <property type="evidence" value="ECO:0007669"/>
    <property type="project" value="UniProtKB-SubCell"/>
</dbReference>
<dbReference type="GO" id="GO:0051539">
    <property type="term" value="F:4 iron, 4 sulfur cluster binding"/>
    <property type="evidence" value="ECO:0007669"/>
    <property type="project" value="UniProtKB-UniRule"/>
</dbReference>
<dbReference type="GO" id="GO:0005524">
    <property type="term" value="F:ATP binding"/>
    <property type="evidence" value="ECO:0007669"/>
    <property type="project" value="UniProtKB-UniRule"/>
</dbReference>
<dbReference type="GO" id="GO:0000287">
    <property type="term" value="F:magnesium ion binding"/>
    <property type="evidence" value="ECO:0007669"/>
    <property type="project" value="UniProtKB-UniRule"/>
</dbReference>
<dbReference type="GO" id="GO:0016783">
    <property type="term" value="F:sulfurtransferase activity"/>
    <property type="evidence" value="ECO:0007669"/>
    <property type="project" value="UniProtKB-UniRule"/>
</dbReference>
<dbReference type="GO" id="GO:0000049">
    <property type="term" value="F:tRNA binding"/>
    <property type="evidence" value="ECO:0007669"/>
    <property type="project" value="UniProtKB-KW"/>
</dbReference>
<dbReference type="GO" id="GO:0034227">
    <property type="term" value="P:tRNA thio-modification"/>
    <property type="evidence" value="ECO:0007669"/>
    <property type="project" value="UniProtKB-UniRule"/>
</dbReference>
<dbReference type="CDD" id="cd24138">
    <property type="entry name" value="TtcA-like"/>
    <property type="match status" value="1"/>
</dbReference>
<dbReference type="FunFam" id="3.40.50.620:FF:000046">
    <property type="entry name" value="tRNA-cytidine(32) 2-sulfurtransferase"/>
    <property type="match status" value="1"/>
</dbReference>
<dbReference type="Gene3D" id="3.40.50.620">
    <property type="entry name" value="HUPs"/>
    <property type="match status" value="1"/>
</dbReference>
<dbReference type="HAMAP" id="MF_01850">
    <property type="entry name" value="TtcA"/>
    <property type="match status" value="1"/>
</dbReference>
<dbReference type="InterPro" id="IPR014729">
    <property type="entry name" value="Rossmann-like_a/b/a_fold"/>
</dbReference>
<dbReference type="InterPro" id="IPR011063">
    <property type="entry name" value="TilS/TtcA_N"/>
</dbReference>
<dbReference type="InterPro" id="IPR012089">
    <property type="entry name" value="tRNA_Cyd_32_2_STrfase"/>
</dbReference>
<dbReference type="NCBIfam" id="NF007972">
    <property type="entry name" value="PRK10696.1"/>
    <property type="match status" value="1"/>
</dbReference>
<dbReference type="PANTHER" id="PTHR43686:SF1">
    <property type="entry name" value="AMINOTRAN_5 DOMAIN-CONTAINING PROTEIN"/>
    <property type="match status" value="1"/>
</dbReference>
<dbReference type="PANTHER" id="PTHR43686">
    <property type="entry name" value="SULFURTRANSFERASE-RELATED"/>
    <property type="match status" value="1"/>
</dbReference>
<dbReference type="Pfam" id="PF01171">
    <property type="entry name" value="ATP_bind_3"/>
    <property type="match status" value="1"/>
</dbReference>
<dbReference type="SUPFAM" id="SSF52402">
    <property type="entry name" value="Adenine nucleotide alpha hydrolases-like"/>
    <property type="match status" value="1"/>
</dbReference>
<sequence>MSQNQDISKKEQYNLNKLQKRLRRNVGEAIADFNMIEEGDRIMVCLSGGKDSYTMLEILRNLQQSAPVNFSLVAVNLDQKQPGFPEHILPEYLENLGVEYKIVEENTYGIVKEKIPEGKTTCSLCSRLRRGILYRTATELGATKIALGHHRDDILQTLFLNMFYGGKMKGMPPKLMSDDGKHIVIRPLAYCREKDIERFSEAKAFPIIPCNLCGSQPNLQRQVIADMLRDWDKRYPGRIETMFSAMQNVVPSHLSDINLFDFKGINHDSDVVDGGDLAFDREEIPLQPAGWQPEEDDNQLDELRLNVVEVK</sequence>